<gene>
    <name type="ordered locus">SAR11_0467</name>
</gene>
<name>YIDD_PELUB</name>
<proteinExistence type="inferred from homology"/>
<reference key="1">
    <citation type="journal article" date="2005" name="Science">
        <title>Genome streamlining in a cosmopolitan oceanic bacterium.</title>
        <authorList>
            <person name="Giovannoni S.J."/>
            <person name="Tripp H.J."/>
            <person name="Givan S."/>
            <person name="Podar M."/>
            <person name="Vergin K.L."/>
            <person name="Baptista D."/>
            <person name="Bibbs L."/>
            <person name="Eads J."/>
            <person name="Richardson T.H."/>
            <person name="Noordewier M."/>
            <person name="Rappe M.S."/>
            <person name="Short J.M."/>
            <person name="Carrington J.C."/>
            <person name="Mathur E.J."/>
        </authorList>
    </citation>
    <scope>NUCLEOTIDE SEQUENCE [LARGE SCALE GENOMIC DNA]</scope>
    <source>
        <strain>HTCC1062</strain>
    </source>
</reference>
<organism>
    <name type="scientific">Pelagibacter ubique (strain HTCC1062)</name>
    <dbReference type="NCBI Taxonomy" id="335992"/>
    <lineage>
        <taxon>Bacteria</taxon>
        <taxon>Pseudomonadati</taxon>
        <taxon>Pseudomonadota</taxon>
        <taxon>Alphaproteobacteria</taxon>
        <taxon>Candidatus Pelagibacterales</taxon>
        <taxon>Candidatus Pelagibacteraceae</taxon>
        <taxon>Candidatus Pelagibacter</taxon>
    </lineage>
</organism>
<keyword id="KW-0997">Cell inner membrane</keyword>
<keyword id="KW-1003">Cell membrane</keyword>
<keyword id="KW-0472">Membrane</keyword>
<keyword id="KW-1185">Reference proteome</keyword>
<protein>
    <recommendedName>
        <fullName evidence="1">Putative membrane protein insertion efficiency factor</fullName>
    </recommendedName>
</protein>
<evidence type="ECO:0000255" key="1">
    <source>
        <dbReference type="HAMAP-Rule" id="MF_00386"/>
    </source>
</evidence>
<comment type="function">
    <text evidence="1">Could be involved in insertion of integral membrane proteins into the membrane.</text>
</comment>
<comment type="subcellular location">
    <subcellularLocation>
        <location evidence="1">Cell inner membrane</location>
        <topology evidence="1">Peripheral membrane protein</topology>
        <orientation evidence="1">Cytoplasmic side</orientation>
    </subcellularLocation>
</comment>
<comment type="similarity">
    <text evidence="1">Belongs to the UPF0161 family.</text>
</comment>
<dbReference type="EMBL" id="CP000084">
    <property type="protein sequence ID" value="AAZ21289.1"/>
    <property type="molecule type" value="Genomic_DNA"/>
</dbReference>
<dbReference type="STRING" id="335992.SAR11_0467"/>
<dbReference type="GeneID" id="66294966"/>
<dbReference type="KEGG" id="pub:SAR11_0467"/>
<dbReference type="eggNOG" id="COG0759">
    <property type="taxonomic scope" value="Bacteria"/>
</dbReference>
<dbReference type="HOGENOM" id="CLU_144811_6_1_5"/>
<dbReference type="OrthoDB" id="9801753at2"/>
<dbReference type="Proteomes" id="UP000002528">
    <property type="component" value="Chromosome"/>
</dbReference>
<dbReference type="GO" id="GO:0005886">
    <property type="term" value="C:plasma membrane"/>
    <property type="evidence" value="ECO:0007669"/>
    <property type="project" value="UniProtKB-SubCell"/>
</dbReference>
<dbReference type="HAMAP" id="MF_00386">
    <property type="entry name" value="UPF0161_YidD"/>
    <property type="match status" value="1"/>
</dbReference>
<dbReference type="InterPro" id="IPR002696">
    <property type="entry name" value="Membr_insert_effic_factor_YidD"/>
</dbReference>
<dbReference type="NCBIfam" id="TIGR00278">
    <property type="entry name" value="membrane protein insertion efficiency factor YidD"/>
    <property type="match status" value="1"/>
</dbReference>
<dbReference type="PANTHER" id="PTHR33383">
    <property type="entry name" value="MEMBRANE PROTEIN INSERTION EFFICIENCY FACTOR-RELATED"/>
    <property type="match status" value="1"/>
</dbReference>
<dbReference type="PANTHER" id="PTHR33383:SF1">
    <property type="entry name" value="MEMBRANE PROTEIN INSERTION EFFICIENCY FACTOR-RELATED"/>
    <property type="match status" value="1"/>
</dbReference>
<dbReference type="Pfam" id="PF01809">
    <property type="entry name" value="YidD"/>
    <property type="match status" value="1"/>
</dbReference>
<dbReference type="SMART" id="SM01234">
    <property type="entry name" value="Haemolytic"/>
    <property type="match status" value="1"/>
</dbReference>
<feature type="chain" id="PRO_0000253137" description="Putative membrane protein insertion efficiency factor">
    <location>
        <begin position="1"/>
        <end position="83"/>
    </location>
</feature>
<sequence>MNIISNILIGLIKFYKMVISPYLTPSCRYLPTCSEYTIECLRTYGLVKAISKSTKRIFSCHPIKILGGGEGFDPVNKEFKAKK</sequence>
<accession>Q4FNF0</accession>